<protein>
    <recommendedName>
        <fullName>Maturation protein A2</fullName>
        <shortName>MP</shortName>
    </recommendedName>
    <alternativeName>
        <fullName>A2</fullName>
    </alternativeName>
    <alternativeName>
        <fullName>Assembly protein</fullName>
        <shortName>A protein</shortName>
    </alternativeName>
</protein>
<evidence type="ECO:0000250" key="1">
    <source>
        <dbReference type="UniProtKB" id="Q8LTE2"/>
    </source>
</evidence>
<evidence type="ECO:0000305" key="2"/>
<dbReference type="EMBL" id="X07489">
    <property type="protein sequence ID" value="CAA30372.1"/>
    <property type="molecule type" value="mRNA"/>
</dbReference>
<dbReference type="PIR" id="S01963">
    <property type="entry name" value="S01963"/>
</dbReference>
<dbReference type="SMR" id="P09676"/>
<dbReference type="KEGG" id="vg:955455"/>
<dbReference type="OrthoDB" id="9308at10239"/>
<dbReference type="Proteomes" id="UP000000728">
    <property type="component" value="Genome"/>
</dbReference>
<dbReference type="GO" id="GO:0044423">
    <property type="term" value="C:virion component"/>
    <property type="evidence" value="ECO:0007669"/>
    <property type="project" value="UniProtKB-KW"/>
</dbReference>
<dbReference type="GO" id="GO:0003723">
    <property type="term" value="F:RNA binding"/>
    <property type="evidence" value="ECO:0007669"/>
    <property type="project" value="UniProtKB-KW"/>
</dbReference>
<dbReference type="GO" id="GO:0098671">
    <property type="term" value="P:adhesion receptor-mediated virion attachment to host cell"/>
    <property type="evidence" value="ECO:0007669"/>
    <property type="project" value="UniProtKB-KW"/>
</dbReference>
<dbReference type="GO" id="GO:0031640">
    <property type="term" value="P:killing of cells of another organism"/>
    <property type="evidence" value="ECO:0007669"/>
    <property type="project" value="UniProtKB-KW"/>
</dbReference>
<dbReference type="GO" id="GO:0039666">
    <property type="term" value="P:virion attachment to host cell pilus"/>
    <property type="evidence" value="ECO:0007669"/>
    <property type="project" value="UniProtKB-KW"/>
</dbReference>
<dbReference type="InterPro" id="IPR005563">
    <property type="entry name" value="A_protein"/>
</dbReference>
<dbReference type="Pfam" id="PF03863">
    <property type="entry name" value="Phage_mat-A"/>
    <property type="match status" value="2"/>
</dbReference>
<organismHost>
    <name type="scientific">Escherichia coli</name>
    <dbReference type="NCBI Taxonomy" id="562"/>
</organismHost>
<comment type="function">
    <text evidence="1">Induces host cell lysis. Inhibits host MurA activity thereby blocking the synthesis of murein precursors necessary for the host cell wall biosynthesis. May be responsible for the attachment to the host pilus.</text>
</comment>
<comment type="subunit">
    <text evidence="1">Interacts with host MurA; this interaction inhibits the first step in host cell wall synthesis. Interacts with the capsid protein dimers.</text>
</comment>
<comment type="subcellular location">
    <subcellularLocation>
        <location evidence="1">Virion</location>
    </subcellularLocation>
    <text evidence="1">A single copy of the maturation protein is present in the virion.</text>
</comment>
<comment type="similarity">
    <text evidence="2">Belongs to the Leviviricetes maturation protein family.</text>
</comment>
<proteinExistence type="evidence at transcript level"/>
<organism>
    <name type="scientific">Enterobacteria phage SP</name>
    <name type="common">Bacteriophage SP</name>
    <dbReference type="NCBI Taxonomy" id="12027"/>
    <lineage>
        <taxon>Viruses</taxon>
        <taxon>Riboviria</taxon>
        <taxon>Orthornavirae</taxon>
        <taxon>Lenarviricota</taxon>
        <taxon>Leviviricetes</taxon>
        <taxon>Norzivirales</taxon>
        <taxon>Fiersviridae</taxon>
        <taxon>Qubevirus</taxon>
        <taxon>Qubevirus faecium</taxon>
    </lineage>
</organism>
<reference key="1">
    <citation type="journal article" date="1988" name="Nucleic Acids Res.">
        <title>Analysis of the complete nucleotide sequence of the group IV RNA coliphage SP.</title>
        <authorList>
            <person name="Hirashima A."/>
            <person name="Hirose T."/>
            <person name="Inayama S."/>
            <person name="Inokuchi Y."/>
            <person name="Jacobson A.B."/>
        </authorList>
    </citation>
    <scope>NUCLEOTIDE SEQUENCE [MRNA]</scope>
</reference>
<name>MATA2_BPSP</name>
<gene>
    <name type="primary">A</name>
</gene>
<keyword id="KW-0204">Cytolysis</keyword>
<keyword id="KW-0578">Host cell lysis by virus</keyword>
<keyword id="KW-0945">Host-virus interaction</keyword>
<keyword id="KW-1185">Reference proteome</keyword>
<keyword id="KW-0694">RNA-binding</keyword>
<keyword id="KW-1233">Viral attachment to host adhesion receptor</keyword>
<keyword id="KW-1161">Viral attachment to host cell</keyword>
<keyword id="KW-1175">Viral attachment to host cell pilus</keyword>
<keyword id="KW-1188">Viral release from host cell</keyword>
<keyword id="KW-0946">Virion</keyword>
<keyword id="KW-1160">Virus entry into host cell</keyword>
<feature type="chain" id="PRO_0000164860" description="Maturation protein A2">
    <location>
        <begin position="1"/>
        <end position="450"/>
    </location>
</feature>
<feature type="region of interest" description="RNA-binding" evidence="1">
    <location>
        <begin position="156"/>
        <end position="174"/>
    </location>
</feature>
<feature type="region of interest" description="RNA-binding" evidence="1">
    <location>
        <begin position="255"/>
        <end position="265"/>
    </location>
</feature>
<feature type="region of interest" description="RNA-binding" evidence="1">
    <location>
        <begin position="321"/>
        <end position="325"/>
    </location>
</feature>
<sequence>MPTLPRGLRFGSNGEVLNDFEALWFPERHTVDLSNGTCKLTGYITNLPGYSDIFPNKGVTAARTPYRSTVPVNHLGYRPVTTVEYIPDGTYVRLDGHVKFEGDLVNGSVDLTNFVISLAAQGGFDYQSVIGPRFSARFSAFSTKYGVLLGEGRETLKYLLLVVRRMREGYRAVRRGDLKRLRNVISTFEPSTIKGKRARAEFSQTYRDKLTGNKVEVRPSEGKWNSSSASDLWLEFRYGLMPLFYDIQSVMEDFMRVHKKIAKIQRFSAGHGKLETVSSRFYPDVHFSLEVTAVLQRRHRWGVIYQDTGSFATFNNGRLVPVKDWKTAAFALLNPAEVAWEVTPYSFVVDWFVNVGDMLEQMGQLYRHVDVVDGFDRKDIKLKSVSVRVLTNDVAHVASFQLRQAKLLHSYYSRVHTVAFPQISPQLDTEIRSVKHVIDSIALLTQRVKR</sequence>
<accession>P09676</accession>